<comment type="function">
    <text evidence="1">Plays an important role in promoting lung pathology in both primary viral infection and secondary bacterial infection. Promotes alteration of mitochondrial morphology, dissipation of mitochondrial membrane potential, and cell death. Alternatively, inhibits the production of interferon in the infected cell at the level of host mitochondrial antiviral signaling MAVS. Its level of expression differs greatly depending on which cell type is infected, in a manner that is independent of the levels of expression of other viral proteins. Monocytic cells are more affected than epithelial cells. Seems to disable virus-infected monocytes or other host innate immune cells. During early stage of infection, predisposes the mitochondria to permeability transition through interaction with host SLC25A6/ANT3 and VDAC1. These proteins participate in the formation of the permeability transition pore complex (PTPC) responsible of the release of mitochondrial products that triggers apoptosis.</text>
</comment>
<comment type="subunit">
    <text evidence="1">Oligomer. Interacts with human SLC25A6/ANT3 and VDAC1. Interacts with host MAVS.</text>
</comment>
<comment type="subcellular location">
    <subcellularLocation>
        <location evidence="1">Host mitochondrion inner membrane</location>
    </subcellularLocation>
    <subcellularLocation>
        <location evidence="1">Host nucleus</location>
    </subcellularLocation>
    <subcellularLocation>
        <location evidence="1">Host cytoplasm</location>
        <location evidence="1">Host cytosol</location>
    </subcellularLocation>
    <text evidence="1">Inner mitochondrial membrane in most cells types. Otherwise is detected in the nucleus and cytosol.</text>
</comment>
<comment type="miscellaneous">
    <text>Is not encoded in all strains, and seems to be dispensable for replication.</text>
</comment>
<comment type="similarity">
    <text evidence="1">Belongs to the influenza viruses PB1-F2 family.</text>
</comment>
<protein>
    <recommendedName>
        <fullName evidence="1">Protein PB1-F2</fullName>
    </recommendedName>
</protein>
<feature type="chain" id="PRO_0000274801" description="Protein PB1-F2">
    <location>
        <begin position="1"/>
        <end position="90"/>
    </location>
</feature>
<feature type="region of interest" description="Mitochondrial targeting sequence" evidence="1">
    <location>
        <begin position="65"/>
        <end position="87"/>
    </location>
</feature>
<feature type="site" description="High pathogenicity" evidence="1">
    <location>
        <position position="66"/>
    </location>
</feature>
<sequence>MEQEQDTPWIQSTGHINIQKRENGQQTLKLEHHNSIQLMDRCPKTMNRAVMLKQTVCWRQWLFLRSPTPVSLKTRVLRRWKPSSKHGWTN</sequence>
<gene>
    <name evidence="1" type="primary">PB1</name>
</gene>
<name>PB1F2_I68A3</name>
<organism>
    <name type="scientific">Influenza A virus (strain A/Turkey/Ontario/6118/1968 H8N4)</name>
    <dbReference type="NCBI Taxonomy" id="311175"/>
    <lineage>
        <taxon>Viruses</taxon>
        <taxon>Riboviria</taxon>
        <taxon>Orthornavirae</taxon>
        <taxon>Negarnaviricota</taxon>
        <taxon>Polyploviricotina</taxon>
        <taxon>Insthoviricetes</taxon>
        <taxon>Articulavirales</taxon>
        <taxon>Orthomyxoviridae</taxon>
        <taxon>Alphainfluenzavirus</taxon>
        <taxon>Alphainfluenzavirus influenzae</taxon>
        <taxon>Influenza A virus</taxon>
    </lineage>
</organism>
<keyword id="KW-0053">Apoptosis</keyword>
<keyword id="KW-1035">Host cytoplasm</keyword>
<keyword id="KW-1043">Host membrane</keyword>
<keyword id="KW-1045">Host mitochondrion</keyword>
<keyword id="KW-1046">Host mitochondrion inner membrane</keyword>
<keyword id="KW-1048">Host nucleus</keyword>
<keyword id="KW-0945">Host-virus interaction</keyword>
<keyword id="KW-1090">Inhibition of host innate immune response by virus</keyword>
<keyword id="KW-1097">Inhibition of host MAVS by virus</keyword>
<keyword id="KW-1113">Inhibition of host RLR pathway by virus</keyword>
<keyword id="KW-0472">Membrane</keyword>
<keyword id="KW-1119">Modulation of host cell apoptosis by virus</keyword>
<keyword id="KW-0899">Viral immunoevasion</keyword>
<dbReference type="EMBL" id="CY014662">
    <property type="protein sequence ID" value="ABI92180.1"/>
    <property type="molecule type" value="Genomic_RNA"/>
</dbReference>
<dbReference type="SMR" id="Q0A460"/>
<dbReference type="Proteomes" id="UP000007770">
    <property type="component" value="Genome"/>
</dbReference>
<dbReference type="GO" id="GO:0044164">
    <property type="term" value="C:host cell cytosol"/>
    <property type="evidence" value="ECO:0007669"/>
    <property type="project" value="UniProtKB-SubCell"/>
</dbReference>
<dbReference type="GO" id="GO:0044192">
    <property type="term" value="C:host cell mitochondrial inner membrane"/>
    <property type="evidence" value="ECO:0007669"/>
    <property type="project" value="UniProtKB-SubCell"/>
</dbReference>
<dbReference type="GO" id="GO:0042025">
    <property type="term" value="C:host cell nucleus"/>
    <property type="evidence" value="ECO:0007669"/>
    <property type="project" value="UniProtKB-SubCell"/>
</dbReference>
<dbReference type="GO" id="GO:0016020">
    <property type="term" value="C:membrane"/>
    <property type="evidence" value="ECO:0007669"/>
    <property type="project" value="UniProtKB-UniRule"/>
</dbReference>
<dbReference type="GO" id="GO:0052150">
    <property type="term" value="P:symbiont-mediated perturbation of host apoptosis"/>
    <property type="evidence" value="ECO:0007669"/>
    <property type="project" value="UniProtKB-KW"/>
</dbReference>
<dbReference type="GO" id="GO:0039545">
    <property type="term" value="P:symbiont-mediated suppression of host cytoplasmic pattern recognition receptor signaling pathway via inhibition of MAVS activity"/>
    <property type="evidence" value="ECO:0007669"/>
    <property type="project" value="UniProtKB-KW"/>
</dbReference>
<dbReference type="HAMAP" id="MF_04064">
    <property type="entry name" value="INFV_PB1F2"/>
    <property type="match status" value="1"/>
</dbReference>
<dbReference type="InterPro" id="IPR021045">
    <property type="entry name" value="Flu_proapoptotic_PB1-F2"/>
</dbReference>
<dbReference type="Pfam" id="PF11986">
    <property type="entry name" value="PB1-F2"/>
    <property type="match status" value="1"/>
</dbReference>
<organismHost>
    <name type="scientific">Aves</name>
    <dbReference type="NCBI Taxonomy" id="8782"/>
</organismHost>
<evidence type="ECO:0000255" key="1">
    <source>
        <dbReference type="HAMAP-Rule" id="MF_04064"/>
    </source>
</evidence>
<accession>Q0A460</accession>
<proteinExistence type="inferred from homology"/>
<reference key="1">
    <citation type="journal article" date="2006" name="Science">
        <title>Large-scale sequence analysis of avian influenza isolates.</title>
        <authorList>
            <person name="Obenauer J.C."/>
            <person name="Denson J."/>
            <person name="Mehta P.K."/>
            <person name="Su X."/>
            <person name="Mukatira S."/>
            <person name="Finkelstein D.B."/>
            <person name="Xu X."/>
            <person name="Wang J."/>
            <person name="Ma J."/>
            <person name="Fan Y."/>
            <person name="Rakestraw K.M."/>
            <person name="Webster R.G."/>
            <person name="Hoffmann E."/>
            <person name="Krauss S."/>
            <person name="Zheng J."/>
            <person name="Zhang Z."/>
            <person name="Naeve C.W."/>
        </authorList>
    </citation>
    <scope>NUCLEOTIDE SEQUENCE [GENOMIC RNA]</scope>
</reference>